<reference key="1">
    <citation type="journal article" date="2008" name="Curr. Biol.">
        <title>The spinster homolog, two of hearts, is required for sphingosine 1-phosphate signaling in zebrafish.</title>
        <authorList>
            <person name="Osborne N."/>
            <person name="Brand-Arzamendi K."/>
            <person name="Ober E.A."/>
            <person name="Jin S.-W."/>
            <person name="Verkade H."/>
            <person name="Holtzman N.G."/>
            <person name="Yelon D."/>
            <person name="Stainier D.Y.R."/>
        </authorList>
    </citation>
    <scope>NUCLEOTIDE SEQUENCE [MRNA]</scope>
    <scope>FUNCTION</scope>
    <scope>TISSUE SPECIFICITY</scope>
    <scope>DEVELOPMENTAL STAGE</scope>
    <scope>DISRUPTION PHENOTYPE</scope>
</reference>
<reference key="2">
    <citation type="journal article" date="2009" name="Science">
        <title>The sphingolipid transporter spns2 functions in migration of zebrafish myocardial precursors.</title>
        <authorList>
            <person name="Kawahara A."/>
            <person name="Nishi T."/>
            <person name="Hisano Y."/>
            <person name="Fukui H."/>
            <person name="Yamaguchi A."/>
            <person name="Mochizuki N."/>
        </authorList>
    </citation>
    <scope>NUCLEOTIDE SEQUENCE [MRNA]</scope>
    <scope>FUNCTION</scope>
    <scope>DEVELOPMENTAL STAGE</scope>
    <scope>MUTAGENESIS OF ARG-153</scope>
    <scope>SUBCELLULAR LOCATION</scope>
    <scope>CATALYTIC ACTIVITY</scope>
</reference>
<name>SPNS2_DANRE</name>
<gene>
    <name evidence="6" type="primary">spns2</name>
    <name evidence="5" type="synonym">toh</name>
</gene>
<comment type="function">
    <text evidence="3 4">Lipid transporter that specifically mediates export of sphingosine-1-phosphate (sphing-4-enine 1-phosphate, S1P) and sphinganine-1-phosphate, which play critical roles in regulating heart development (PubMed:19062281, PubMed:19074308). Mediates the export of S1P from cells in the extraembryonic yolk syncytial layer (YSL), thereby regulating myocardial precursor migration (PubMed:19062281, PubMed:19074308).</text>
</comment>
<comment type="catalytic activity">
    <reaction evidence="1">
        <text>sphing-4-enine 1-phosphate(in) = sphing-4-enine 1-phosphate(out)</text>
        <dbReference type="Rhea" id="RHEA:38667"/>
        <dbReference type="ChEBI" id="CHEBI:60119"/>
    </reaction>
</comment>
<comment type="catalytic activity">
    <reaction evidence="4">
        <text>sphinganine 1-phosphate(in) = sphinganine 1-phosphate(out)</text>
        <dbReference type="Rhea" id="RHEA:38671"/>
        <dbReference type="ChEBI" id="CHEBI:57939"/>
    </reaction>
</comment>
<comment type="subcellular location">
    <subcellularLocation>
        <location evidence="4">Cell membrane</location>
        <topology evidence="2">Multi-pass membrane protein</topology>
    </subcellularLocation>
    <subcellularLocation>
        <location evidence="4">Endosome membrane</location>
        <topology evidence="2">Multi-pass membrane protein</topology>
    </subcellularLocation>
</comment>
<comment type="developmental stage">
    <text evidence="3 4">Induced at the marginal cells of the blastoderm at dome stage. During gastrulation stages, it is predominantly expressed in the extraembryonic yolk syncytial layer (YSL) with a dorsal-to-ventral gradient. Expression in the YSL is strongly detected just below the developing myocardial precursors and maintained throughout segmentation period. This expression continues through early somitogenesis. However, as somitogenesis proceeds, expression domains become evident in the somitic mesoderm and in the endoderm adjacent to the yolk extension. By 24 hpf, it is strongly expressed in a distinct compartment of the somites, in the endoderm, and in the heart.</text>
</comment>
<comment type="disruption phenotype">
    <text evidence="3">Disrupted formation of the primitive heart tube.</text>
</comment>
<comment type="similarity">
    <text evidence="7">Belongs to the major facilitator superfamily. Spinster (TC 2.A.1.49) family.</text>
</comment>
<accession>A2SWM2</accession>
<accession>B9A1T2</accession>
<sequence length="504" mass="54670">MCVESDGCEIEGCSSSDEVHTLSGSMSPALKSRDLHHCRPGQKFHAALLRCRTPLVAAGILSFGNVLNYMDRYTVAGVLLDIQKQFKVGDSSAGLLQTVFICSFMVAAPIFGYLGDRFNRKIILSCGIFFWSAVTLLSSFITKEYYWLLVLSRCLVGIGESSYSSISPTIIGDLFTNNKRTVMLSVFYLAIPLGSGLGYILGSIAKDAGGHWYWALRVSPMLGLTAGTLILIFVSEPKRGSADQPGGRLKTRTSWVCDMKALAKNRSYVFSSLASAAVSFATGAFGIWIPQYLVRAQVVQKSAESCTYQPCSSRDSLIFGAITCVTGLLGVVIGAVTTRLCRQKTERADPLVCAVSMLGSAIFICLIFVVAKKSIVGAYICIFIGETLLFLNWAITADILMYVVIPTRRATAVAFQGFTSHLLGDAGSPYLIGLISDSLQESYATSEIWQFLSLGYALMLCPFVIVLGGMFFLATALFFLDDRDKAAKQVNQLARPPSTVKVTK</sequence>
<feature type="chain" id="PRO_0000305045" description="Sphingosine-1-phosphate transporter SPNS2">
    <location>
        <begin position="1"/>
        <end position="504"/>
    </location>
</feature>
<feature type="transmembrane region" description="Helical" evidence="2">
    <location>
        <begin position="48"/>
        <end position="70"/>
    </location>
</feature>
<feature type="transmembrane region" description="Helical" evidence="2">
    <location>
        <begin position="94"/>
        <end position="114"/>
    </location>
</feature>
<feature type="transmembrane region" description="Helical" evidence="2">
    <location>
        <begin position="122"/>
        <end position="142"/>
    </location>
</feature>
<feature type="transmembrane region" description="Helical" evidence="2">
    <location>
        <begin position="182"/>
        <end position="202"/>
    </location>
</feature>
<feature type="transmembrane region" description="Helical" evidence="2">
    <location>
        <begin position="214"/>
        <end position="234"/>
    </location>
</feature>
<feature type="transmembrane region" description="Helical" evidence="2">
    <location>
        <begin position="269"/>
        <end position="289"/>
    </location>
</feature>
<feature type="transmembrane region" description="Helical" evidence="2">
    <location>
        <begin position="317"/>
        <end position="337"/>
    </location>
</feature>
<feature type="transmembrane region" description="Helical" evidence="2">
    <location>
        <begin position="351"/>
        <end position="371"/>
    </location>
</feature>
<feature type="transmembrane region" description="Helical" evidence="2">
    <location>
        <begin position="375"/>
        <end position="395"/>
    </location>
</feature>
<feature type="transmembrane region" description="Helical" evidence="2">
    <location>
        <begin position="415"/>
        <end position="435"/>
    </location>
</feature>
<feature type="transmembrane region" description="Helical" evidence="2">
    <location>
        <begin position="460"/>
        <end position="480"/>
    </location>
</feature>
<feature type="mutagenesis site" description="In ko157; displays cardia bifida (2 hearts)." evidence="4">
    <original>R</original>
    <variation>S</variation>
    <location>
        <position position="153"/>
    </location>
</feature>
<feature type="sequence conflict" description="In Ref. 1; ABC88833." evidence="7" ref="1">
    <original>I</original>
    <variation>M</variation>
    <location>
        <position position="171"/>
    </location>
</feature>
<protein>
    <recommendedName>
        <fullName evidence="7">Sphingosine-1-phosphate transporter SPNS2</fullName>
    </recommendedName>
    <alternativeName>
        <fullName evidence="6">Protein spinster homolog 2</fullName>
    </alternativeName>
    <alternativeName>
        <fullName evidence="5">Protein two of hearts</fullName>
    </alternativeName>
</protein>
<evidence type="ECO:0000250" key="1">
    <source>
        <dbReference type="UniProtKB" id="Q8IVW8"/>
    </source>
</evidence>
<evidence type="ECO:0000255" key="2"/>
<evidence type="ECO:0000269" key="3">
    <source>
    </source>
</evidence>
<evidence type="ECO:0000269" key="4">
    <source>
    </source>
</evidence>
<evidence type="ECO:0000303" key="5">
    <source>
    </source>
</evidence>
<evidence type="ECO:0000303" key="6">
    <source>
    </source>
</evidence>
<evidence type="ECO:0000305" key="7"/>
<keyword id="KW-1003">Cell membrane</keyword>
<keyword id="KW-0967">Endosome</keyword>
<keyword id="KW-0445">Lipid transport</keyword>
<keyword id="KW-0472">Membrane</keyword>
<keyword id="KW-1185">Reference proteome</keyword>
<keyword id="KW-0812">Transmembrane</keyword>
<keyword id="KW-1133">Transmembrane helix</keyword>
<keyword id="KW-0813">Transport</keyword>
<dbReference type="EMBL" id="DQ360111">
    <property type="protein sequence ID" value="ABC88833.1"/>
    <property type="molecule type" value="mRNA"/>
</dbReference>
<dbReference type="EMBL" id="AB441164">
    <property type="protein sequence ID" value="BAH15191.1"/>
    <property type="molecule type" value="mRNA"/>
</dbReference>
<dbReference type="RefSeq" id="NP_001077316.1">
    <property type="nucleotide sequence ID" value="NM_001083847.1"/>
</dbReference>
<dbReference type="SMR" id="A2SWM2"/>
<dbReference type="FunCoup" id="A2SWM2">
    <property type="interactions" value="528"/>
</dbReference>
<dbReference type="STRING" id="7955.ENSDARP00000100856"/>
<dbReference type="TCDB" id="2.A.1.49.4">
    <property type="family name" value="the major facilitator superfamily (mfs)"/>
</dbReference>
<dbReference type="Ensembl" id="ENSDART00000153909">
    <property type="protein sequence ID" value="ENSDARP00000129119"/>
    <property type="gene ID" value="ENSDARG00000061017"/>
</dbReference>
<dbReference type="GeneID" id="568117"/>
<dbReference type="KEGG" id="dre:568117"/>
<dbReference type="AGR" id="ZFIN:ZDB-GENE-030131-5843"/>
<dbReference type="CTD" id="124976"/>
<dbReference type="ZFIN" id="ZDB-GENE-030131-5843">
    <property type="gene designation" value="spns2"/>
</dbReference>
<dbReference type="eggNOG" id="KOG1330">
    <property type="taxonomic scope" value="Eukaryota"/>
</dbReference>
<dbReference type="HOGENOM" id="CLU_001265_5_12_1"/>
<dbReference type="InParanoid" id="A2SWM2"/>
<dbReference type="OrthoDB" id="6770063at2759"/>
<dbReference type="PhylomeDB" id="A2SWM2"/>
<dbReference type="Reactome" id="R-DRE-1660661">
    <property type="pathway name" value="Sphingolipid de novo biosynthesis"/>
</dbReference>
<dbReference type="PRO" id="PR:A2SWM2"/>
<dbReference type="Proteomes" id="UP000000437">
    <property type="component" value="Alternate scaffold 5"/>
</dbReference>
<dbReference type="Proteomes" id="UP000000437">
    <property type="component" value="Chromosome 5"/>
</dbReference>
<dbReference type="Bgee" id="ENSDARG00000061017">
    <property type="expression patterns" value="Expressed in spleen and 21 other cell types or tissues"/>
</dbReference>
<dbReference type="ExpressionAtlas" id="A2SWM2">
    <property type="expression patterns" value="baseline and differential"/>
</dbReference>
<dbReference type="GO" id="GO:0010008">
    <property type="term" value="C:endosome membrane"/>
    <property type="evidence" value="ECO:0007669"/>
    <property type="project" value="UniProtKB-SubCell"/>
</dbReference>
<dbReference type="GO" id="GO:0016020">
    <property type="term" value="C:membrane"/>
    <property type="evidence" value="ECO:0000318"/>
    <property type="project" value="GO_Central"/>
</dbReference>
<dbReference type="GO" id="GO:0005886">
    <property type="term" value="C:plasma membrane"/>
    <property type="evidence" value="ECO:0007669"/>
    <property type="project" value="UniProtKB-SubCell"/>
</dbReference>
<dbReference type="GO" id="GO:0046624">
    <property type="term" value="F:sphingolipid transporter activity"/>
    <property type="evidence" value="ECO:0000250"/>
    <property type="project" value="UniProtKB"/>
</dbReference>
<dbReference type="GO" id="GO:0022857">
    <property type="term" value="F:transmembrane transporter activity"/>
    <property type="evidence" value="ECO:0000318"/>
    <property type="project" value="GO_Central"/>
</dbReference>
<dbReference type="GO" id="GO:0001569">
    <property type="term" value="P:branching involved in blood vessel morphogenesis"/>
    <property type="evidence" value="ECO:0000314"/>
    <property type="project" value="ZFIN"/>
</dbReference>
<dbReference type="GO" id="GO:0003319">
    <property type="term" value="P:cardioblast migration to the midline involved in heart rudiment formation"/>
    <property type="evidence" value="ECO:0000315"/>
    <property type="project" value="ZFIN"/>
</dbReference>
<dbReference type="GO" id="GO:0003143">
    <property type="term" value="P:embryonic heart tube morphogenesis"/>
    <property type="evidence" value="ECO:0000315"/>
    <property type="project" value="ZFIN"/>
</dbReference>
<dbReference type="GO" id="GO:0048703">
    <property type="term" value="P:embryonic viscerocranium morphogenesis"/>
    <property type="evidence" value="ECO:0000316"/>
    <property type="project" value="ZFIN"/>
</dbReference>
<dbReference type="GO" id="GO:0006869">
    <property type="term" value="P:lipid transport"/>
    <property type="evidence" value="ECO:0000318"/>
    <property type="project" value="GO_Central"/>
</dbReference>
<dbReference type="GO" id="GO:0061035">
    <property type="term" value="P:regulation of cartilage development"/>
    <property type="evidence" value="ECO:0000315"/>
    <property type="project" value="ZFIN"/>
</dbReference>
<dbReference type="GO" id="GO:0002920">
    <property type="term" value="P:regulation of humoral immune response"/>
    <property type="evidence" value="ECO:0000250"/>
    <property type="project" value="UniProtKB"/>
</dbReference>
<dbReference type="GO" id="GO:2000404">
    <property type="term" value="P:regulation of T cell migration"/>
    <property type="evidence" value="ECO:0000250"/>
    <property type="project" value="UniProtKB"/>
</dbReference>
<dbReference type="GO" id="GO:0007605">
    <property type="term" value="P:sensory perception of sound"/>
    <property type="evidence" value="ECO:0000250"/>
    <property type="project" value="UniProtKB"/>
</dbReference>
<dbReference type="GO" id="GO:0003376">
    <property type="term" value="P:sphingosine-1-phosphate receptor signaling pathway"/>
    <property type="evidence" value="ECO:0000315"/>
    <property type="project" value="ZFIN"/>
</dbReference>
<dbReference type="GO" id="GO:0001944">
    <property type="term" value="P:vasculature development"/>
    <property type="evidence" value="ECO:0000316"/>
    <property type="project" value="ZFIN"/>
</dbReference>
<dbReference type="CDD" id="cd17328">
    <property type="entry name" value="MFS_spinster_like"/>
    <property type="match status" value="1"/>
</dbReference>
<dbReference type="FunFam" id="1.20.1250.20:FF:000097">
    <property type="entry name" value="protein spinster homolog 1"/>
    <property type="match status" value="1"/>
</dbReference>
<dbReference type="Gene3D" id="1.20.1250.20">
    <property type="entry name" value="MFS general substrate transporter like domains"/>
    <property type="match status" value="1"/>
</dbReference>
<dbReference type="InterPro" id="IPR011701">
    <property type="entry name" value="MFS"/>
</dbReference>
<dbReference type="InterPro" id="IPR020846">
    <property type="entry name" value="MFS_dom"/>
</dbReference>
<dbReference type="InterPro" id="IPR044770">
    <property type="entry name" value="MFS_spinster-like"/>
</dbReference>
<dbReference type="InterPro" id="IPR036259">
    <property type="entry name" value="MFS_trans_sf"/>
</dbReference>
<dbReference type="PANTHER" id="PTHR23505:SF4">
    <property type="entry name" value="SPHINGOSINE-1-PHOSPHATE TRANSPORTER SPNS2"/>
    <property type="match status" value="1"/>
</dbReference>
<dbReference type="PANTHER" id="PTHR23505">
    <property type="entry name" value="SPINSTER"/>
    <property type="match status" value="1"/>
</dbReference>
<dbReference type="Pfam" id="PF07690">
    <property type="entry name" value="MFS_1"/>
    <property type="match status" value="1"/>
</dbReference>
<dbReference type="SUPFAM" id="SSF103473">
    <property type="entry name" value="MFS general substrate transporter"/>
    <property type="match status" value="1"/>
</dbReference>
<dbReference type="PROSITE" id="PS50850">
    <property type="entry name" value="MFS"/>
    <property type="match status" value="1"/>
</dbReference>
<organism>
    <name type="scientific">Danio rerio</name>
    <name type="common">Zebrafish</name>
    <name type="synonym">Brachydanio rerio</name>
    <dbReference type="NCBI Taxonomy" id="7955"/>
    <lineage>
        <taxon>Eukaryota</taxon>
        <taxon>Metazoa</taxon>
        <taxon>Chordata</taxon>
        <taxon>Craniata</taxon>
        <taxon>Vertebrata</taxon>
        <taxon>Euteleostomi</taxon>
        <taxon>Actinopterygii</taxon>
        <taxon>Neopterygii</taxon>
        <taxon>Teleostei</taxon>
        <taxon>Ostariophysi</taxon>
        <taxon>Cypriniformes</taxon>
        <taxon>Danionidae</taxon>
        <taxon>Danioninae</taxon>
        <taxon>Danio</taxon>
    </lineage>
</organism>
<proteinExistence type="evidence at protein level"/>